<reference key="1">
    <citation type="journal article" date="1999" name="J. Exp. Zool.">
        <title>Genomic organization of the Hoxa4-Hoxa10 region from Morone saxatilis: implications for Hox gene evolution among vertebrates.</title>
        <authorList>
            <person name="Snell E.A."/>
            <person name="Scemama J.L."/>
            <person name="Stellwag E.J."/>
        </authorList>
    </citation>
    <scope>NUCLEOTIDE SEQUENCE [GENOMIC DNA]</scope>
</reference>
<feature type="chain" id="PRO_0000200078" description="Homeobox protein Hox-A7">
    <location>
        <begin position="1"/>
        <end position="225"/>
    </location>
</feature>
<feature type="DNA-binding region" description="Homeobox" evidence="2">
    <location>
        <begin position="126"/>
        <end position="185"/>
    </location>
</feature>
<feature type="region of interest" description="Disordered" evidence="3">
    <location>
        <begin position="183"/>
        <end position="225"/>
    </location>
</feature>
<feature type="short sequence motif" description="Antp-type hexapeptide">
    <location>
        <begin position="115"/>
        <end position="120"/>
    </location>
</feature>
<feature type="compositionally biased region" description="Basic and acidic residues" evidence="3">
    <location>
        <begin position="184"/>
        <end position="200"/>
    </location>
</feature>
<feature type="compositionally biased region" description="Basic and acidic residues" evidence="3">
    <location>
        <begin position="208"/>
        <end position="225"/>
    </location>
</feature>
<keyword id="KW-0217">Developmental protein</keyword>
<keyword id="KW-0238">DNA-binding</keyword>
<keyword id="KW-0371">Homeobox</keyword>
<keyword id="KW-0539">Nucleus</keyword>
<keyword id="KW-0804">Transcription</keyword>
<keyword id="KW-0805">Transcription regulation</keyword>
<organism>
    <name type="scientific">Morone saxatilis</name>
    <name type="common">Striped bass</name>
    <name type="synonym">Perca saxatilis</name>
    <dbReference type="NCBI Taxonomy" id="34816"/>
    <lineage>
        <taxon>Eukaryota</taxon>
        <taxon>Metazoa</taxon>
        <taxon>Chordata</taxon>
        <taxon>Craniata</taxon>
        <taxon>Vertebrata</taxon>
        <taxon>Euteleostomi</taxon>
        <taxon>Actinopterygii</taxon>
        <taxon>Neopterygii</taxon>
        <taxon>Teleostei</taxon>
        <taxon>Neoteleostei</taxon>
        <taxon>Acanthomorphata</taxon>
        <taxon>Eupercaria</taxon>
        <taxon>Moronidae</taxon>
        <taxon>Morone</taxon>
    </lineage>
</organism>
<protein>
    <recommendedName>
        <fullName>Homeobox protein Hox-A7</fullName>
    </recommendedName>
</protein>
<sequence>MSSYYVDGLLSKYTAGSSLFPNVERASCSIGPSGEDYGSARTTAAIAFAPSLSGVYSVSDAVYQSRPVFTSGYGQGQDAHTLHCSLFDQSRLFTDSCCHPEPGPLTSPPDKQYRMYPWMRASDPTRKRGRQTYSRYQTLELEKEFHFNRYLTRRRRIEIAHALCLSERQIKIWFQNRRMKWKKDHKEEPVSTPSGEKDCDIQPVSEAEEPKAVNNPERRFGVRNG</sequence>
<evidence type="ECO:0000250" key="1"/>
<evidence type="ECO:0000255" key="2">
    <source>
        <dbReference type="PROSITE-ProRule" id="PRU00108"/>
    </source>
</evidence>
<evidence type="ECO:0000256" key="3">
    <source>
        <dbReference type="SAM" id="MobiDB-lite"/>
    </source>
</evidence>
<evidence type="ECO:0000305" key="4"/>
<accession>Q9PWD4</accession>
<dbReference type="EMBL" id="AF089743">
    <property type="protein sequence ID" value="AAD46397.1"/>
    <property type="molecule type" value="Genomic_DNA"/>
</dbReference>
<dbReference type="GO" id="GO:0005634">
    <property type="term" value="C:nucleus"/>
    <property type="evidence" value="ECO:0007669"/>
    <property type="project" value="UniProtKB-SubCell"/>
</dbReference>
<dbReference type="GO" id="GO:0000981">
    <property type="term" value="F:DNA-binding transcription factor activity, RNA polymerase II-specific"/>
    <property type="evidence" value="ECO:0007669"/>
    <property type="project" value="InterPro"/>
</dbReference>
<dbReference type="GO" id="GO:0000978">
    <property type="term" value="F:RNA polymerase II cis-regulatory region sequence-specific DNA binding"/>
    <property type="evidence" value="ECO:0007669"/>
    <property type="project" value="TreeGrafter"/>
</dbReference>
<dbReference type="GO" id="GO:0009952">
    <property type="term" value="P:anterior/posterior pattern specification"/>
    <property type="evidence" value="ECO:0007669"/>
    <property type="project" value="TreeGrafter"/>
</dbReference>
<dbReference type="CDD" id="cd00086">
    <property type="entry name" value="homeodomain"/>
    <property type="match status" value="1"/>
</dbReference>
<dbReference type="FunFam" id="1.10.10.60:FF:000017">
    <property type="entry name" value="Homeobox protein antennapedia"/>
    <property type="match status" value="1"/>
</dbReference>
<dbReference type="Gene3D" id="1.10.10.60">
    <property type="entry name" value="Homeodomain-like"/>
    <property type="match status" value="1"/>
</dbReference>
<dbReference type="InterPro" id="IPR050296">
    <property type="entry name" value="Antp_homeobox"/>
</dbReference>
<dbReference type="InterPro" id="IPR001356">
    <property type="entry name" value="HD"/>
</dbReference>
<dbReference type="InterPro" id="IPR020479">
    <property type="entry name" value="HD_metazoa"/>
</dbReference>
<dbReference type="InterPro" id="IPR017995">
    <property type="entry name" value="Homeobox_antennapedia"/>
</dbReference>
<dbReference type="InterPro" id="IPR001827">
    <property type="entry name" value="Homeobox_Antennapedia_CS"/>
</dbReference>
<dbReference type="InterPro" id="IPR017970">
    <property type="entry name" value="Homeobox_CS"/>
</dbReference>
<dbReference type="InterPro" id="IPR009057">
    <property type="entry name" value="Homeodomain-like_sf"/>
</dbReference>
<dbReference type="PANTHER" id="PTHR45659">
    <property type="entry name" value="HOMEOBOX PROTEIN HOX"/>
    <property type="match status" value="1"/>
</dbReference>
<dbReference type="PANTHER" id="PTHR45659:SF10">
    <property type="entry name" value="HOMEOBOX PROTEIN HOX-A5"/>
    <property type="match status" value="1"/>
</dbReference>
<dbReference type="Pfam" id="PF00046">
    <property type="entry name" value="Homeodomain"/>
    <property type="match status" value="1"/>
</dbReference>
<dbReference type="PRINTS" id="PR00025">
    <property type="entry name" value="ANTENNAPEDIA"/>
</dbReference>
<dbReference type="PRINTS" id="PR00024">
    <property type="entry name" value="HOMEOBOX"/>
</dbReference>
<dbReference type="SMART" id="SM00389">
    <property type="entry name" value="HOX"/>
    <property type="match status" value="1"/>
</dbReference>
<dbReference type="SUPFAM" id="SSF46689">
    <property type="entry name" value="Homeodomain-like"/>
    <property type="match status" value="1"/>
</dbReference>
<dbReference type="PROSITE" id="PS00032">
    <property type="entry name" value="ANTENNAPEDIA"/>
    <property type="match status" value="1"/>
</dbReference>
<dbReference type="PROSITE" id="PS00027">
    <property type="entry name" value="HOMEOBOX_1"/>
    <property type="match status" value="1"/>
</dbReference>
<dbReference type="PROSITE" id="PS50071">
    <property type="entry name" value="HOMEOBOX_2"/>
    <property type="match status" value="1"/>
</dbReference>
<gene>
    <name type="primary">hoxa7</name>
</gene>
<proteinExistence type="inferred from homology"/>
<name>HXA7_MORSA</name>
<comment type="function">
    <text evidence="1">Sequence-specific transcription factor which is part of a developmental regulatory system that provides cells with specific positional identities on the anterior-posterior axis.</text>
</comment>
<comment type="subcellular location">
    <subcellularLocation>
        <location evidence="2">Nucleus</location>
    </subcellularLocation>
</comment>
<comment type="similarity">
    <text evidence="4">Belongs to the Antp homeobox family.</text>
</comment>